<name>RL4_CHLCH</name>
<comment type="function">
    <text evidence="1">One of the primary rRNA binding proteins, this protein initially binds near the 5'-end of the 23S rRNA. It is important during the early stages of 50S assembly. It makes multiple contacts with different domains of the 23S rRNA in the assembled 50S subunit and ribosome.</text>
</comment>
<comment type="function">
    <text evidence="1">Forms part of the polypeptide exit tunnel.</text>
</comment>
<comment type="subunit">
    <text evidence="1">Part of the 50S ribosomal subunit.</text>
</comment>
<comment type="similarity">
    <text evidence="1">Belongs to the universal ribosomal protein uL4 family.</text>
</comment>
<protein>
    <recommendedName>
        <fullName evidence="1">Large ribosomal subunit protein uL4</fullName>
    </recommendedName>
    <alternativeName>
        <fullName evidence="3">50S ribosomal protein L4</fullName>
    </alternativeName>
</protein>
<organism>
    <name type="scientific">Chlorobium chlorochromatii (strain CaD3)</name>
    <dbReference type="NCBI Taxonomy" id="340177"/>
    <lineage>
        <taxon>Bacteria</taxon>
        <taxon>Pseudomonadati</taxon>
        <taxon>Chlorobiota</taxon>
        <taxon>Chlorobiia</taxon>
        <taxon>Chlorobiales</taxon>
        <taxon>Chlorobiaceae</taxon>
        <taxon>Chlorobium/Pelodictyon group</taxon>
        <taxon>Chlorobium</taxon>
    </lineage>
</organism>
<evidence type="ECO:0000255" key="1">
    <source>
        <dbReference type="HAMAP-Rule" id="MF_01328"/>
    </source>
</evidence>
<evidence type="ECO:0000256" key="2">
    <source>
        <dbReference type="SAM" id="MobiDB-lite"/>
    </source>
</evidence>
<evidence type="ECO:0000305" key="3"/>
<accession>Q3APH4</accession>
<reference key="1">
    <citation type="submission" date="2005-08" db="EMBL/GenBank/DDBJ databases">
        <title>Complete sequence of Chlorobium chlorochromatii CaD3.</title>
        <authorList>
            <consortium name="US DOE Joint Genome Institute"/>
            <person name="Copeland A."/>
            <person name="Lucas S."/>
            <person name="Lapidus A."/>
            <person name="Barry K."/>
            <person name="Detter J.C."/>
            <person name="Glavina T."/>
            <person name="Hammon N."/>
            <person name="Israni S."/>
            <person name="Pitluck S."/>
            <person name="Bryant D."/>
            <person name="Schmutz J."/>
            <person name="Larimer F."/>
            <person name="Land M."/>
            <person name="Kyrpides N."/>
            <person name="Ivanova N."/>
            <person name="Richardson P."/>
        </authorList>
    </citation>
    <scope>NUCLEOTIDE SEQUENCE [LARGE SCALE GENOMIC DNA]</scope>
    <source>
        <strain>CaD3</strain>
    </source>
</reference>
<sequence length="208" mass="22840">MELKVLNTAGTETGEVVILRDDIFGIEISEHAMYLDVKSILANKRQGTHKAKTRSEVRGGGKKPFRQKGTGNARQGSSRSPIHVGGGTIFGPQPHTYEQKVNKKVKLLARRSALSAKAQAGKIVVVDDFRFDAIKTKPFADILKNLGLDAKKTLLLMPEYDMVVNRSGRNIAKLEIMTADKASTYDILYSNTLLVQKSALKTIDETLG</sequence>
<keyword id="KW-0687">Ribonucleoprotein</keyword>
<keyword id="KW-0689">Ribosomal protein</keyword>
<keyword id="KW-0694">RNA-binding</keyword>
<keyword id="KW-0699">rRNA-binding</keyword>
<dbReference type="EMBL" id="CP000108">
    <property type="protein sequence ID" value="ABB29101.1"/>
    <property type="molecule type" value="Genomic_DNA"/>
</dbReference>
<dbReference type="SMR" id="Q3APH4"/>
<dbReference type="STRING" id="340177.Cag_1850"/>
<dbReference type="KEGG" id="cch:Cag_1850"/>
<dbReference type="eggNOG" id="COG0088">
    <property type="taxonomic scope" value="Bacteria"/>
</dbReference>
<dbReference type="HOGENOM" id="CLU_041575_5_2_10"/>
<dbReference type="OrthoDB" id="9803201at2"/>
<dbReference type="GO" id="GO:1990904">
    <property type="term" value="C:ribonucleoprotein complex"/>
    <property type="evidence" value="ECO:0007669"/>
    <property type="project" value="UniProtKB-KW"/>
</dbReference>
<dbReference type="GO" id="GO:0005840">
    <property type="term" value="C:ribosome"/>
    <property type="evidence" value="ECO:0007669"/>
    <property type="project" value="UniProtKB-KW"/>
</dbReference>
<dbReference type="GO" id="GO:0019843">
    <property type="term" value="F:rRNA binding"/>
    <property type="evidence" value="ECO:0007669"/>
    <property type="project" value="UniProtKB-UniRule"/>
</dbReference>
<dbReference type="GO" id="GO:0003735">
    <property type="term" value="F:structural constituent of ribosome"/>
    <property type="evidence" value="ECO:0007669"/>
    <property type="project" value="InterPro"/>
</dbReference>
<dbReference type="GO" id="GO:0006412">
    <property type="term" value="P:translation"/>
    <property type="evidence" value="ECO:0007669"/>
    <property type="project" value="UniProtKB-UniRule"/>
</dbReference>
<dbReference type="Gene3D" id="3.40.1370.10">
    <property type="match status" value="1"/>
</dbReference>
<dbReference type="HAMAP" id="MF_01328_B">
    <property type="entry name" value="Ribosomal_uL4_B"/>
    <property type="match status" value="1"/>
</dbReference>
<dbReference type="InterPro" id="IPR002136">
    <property type="entry name" value="Ribosomal_uL4"/>
</dbReference>
<dbReference type="InterPro" id="IPR013005">
    <property type="entry name" value="Ribosomal_uL4-like"/>
</dbReference>
<dbReference type="InterPro" id="IPR023574">
    <property type="entry name" value="Ribosomal_uL4_dom_sf"/>
</dbReference>
<dbReference type="NCBIfam" id="TIGR03953">
    <property type="entry name" value="rplD_bact"/>
    <property type="match status" value="1"/>
</dbReference>
<dbReference type="PANTHER" id="PTHR10746">
    <property type="entry name" value="50S RIBOSOMAL PROTEIN L4"/>
    <property type="match status" value="1"/>
</dbReference>
<dbReference type="PANTHER" id="PTHR10746:SF6">
    <property type="entry name" value="LARGE RIBOSOMAL SUBUNIT PROTEIN UL4M"/>
    <property type="match status" value="1"/>
</dbReference>
<dbReference type="Pfam" id="PF00573">
    <property type="entry name" value="Ribosomal_L4"/>
    <property type="match status" value="1"/>
</dbReference>
<dbReference type="SUPFAM" id="SSF52166">
    <property type="entry name" value="Ribosomal protein L4"/>
    <property type="match status" value="1"/>
</dbReference>
<gene>
    <name evidence="1" type="primary">rplD</name>
    <name type="ordered locus">Cag_1850</name>
</gene>
<feature type="chain" id="PRO_0000242361" description="Large ribosomal subunit protein uL4">
    <location>
        <begin position="1"/>
        <end position="208"/>
    </location>
</feature>
<feature type="region of interest" description="Disordered" evidence="2">
    <location>
        <begin position="45"/>
        <end position="95"/>
    </location>
</feature>
<feature type="compositionally biased region" description="Polar residues" evidence="2">
    <location>
        <begin position="69"/>
        <end position="80"/>
    </location>
</feature>
<proteinExistence type="inferred from homology"/>